<dbReference type="EC" id="5.1.99.6"/>
<dbReference type="EMBL" id="AAKM01000004">
    <property type="protein sequence ID" value="EDL46063.1"/>
    <property type="molecule type" value="Genomic_DNA"/>
</dbReference>
<dbReference type="RefSeq" id="XP_001615790.1">
    <property type="nucleotide sequence ID" value="XM_001615740.1"/>
</dbReference>
<dbReference type="SMR" id="A5K3F9"/>
<dbReference type="FunCoup" id="A5K3F9">
    <property type="interactions" value="19"/>
</dbReference>
<dbReference type="STRING" id="126793.A5K3F9"/>
<dbReference type="EnsemblProtists" id="EDL46063">
    <property type="protein sequence ID" value="EDL46063"/>
    <property type="gene ID" value="PVX_117475"/>
</dbReference>
<dbReference type="GeneID" id="5475088"/>
<dbReference type="KEGG" id="pvx:PVX_117475"/>
<dbReference type="VEuPathDB" id="PlasmoDB:PVX_117475"/>
<dbReference type="InParanoid" id="A5K3F9"/>
<dbReference type="OMA" id="RHLFHYG"/>
<dbReference type="PhylomeDB" id="A5K3F9"/>
<dbReference type="Proteomes" id="UP000008333">
    <property type="component" value="Chromosome 12"/>
</dbReference>
<dbReference type="GO" id="GO:0005739">
    <property type="term" value="C:mitochondrion"/>
    <property type="evidence" value="ECO:0007669"/>
    <property type="project" value="TreeGrafter"/>
</dbReference>
<dbReference type="GO" id="GO:0046872">
    <property type="term" value="F:metal ion binding"/>
    <property type="evidence" value="ECO:0007669"/>
    <property type="project" value="UniProtKB-KW"/>
</dbReference>
<dbReference type="GO" id="GO:0052856">
    <property type="term" value="F:NAD(P)HX epimerase activity"/>
    <property type="evidence" value="ECO:0007669"/>
    <property type="project" value="UniProtKB-UniRule"/>
</dbReference>
<dbReference type="GO" id="GO:0000166">
    <property type="term" value="F:nucleotide binding"/>
    <property type="evidence" value="ECO:0007669"/>
    <property type="project" value="UniProtKB-KW"/>
</dbReference>
<dbReference type="Gene3D" id="3.40.50.10260">
    <property type="entry name" value="YjeF N-terminal domain"/>
    <property type="match status" value="1"/>
</dbReference>
<dbReference type="HAMAP" id="MF_01966">
    <property type="entry name" value="NADHX_epimerase"/>
    <property type="match status" value="1"/>
</dbReference>
<dbReference type="InterPro" id="IPR004443">
    <property type="entry name" value="YjeF_N_dom"/>
</dbReference>
<dbReference type="InterPro" id="IPR036652">
    <property type="entry name" value="YjeF_N_dom_sf"/>
</dbReference>
<dbReference type="InterPro" id="IPR032976">
    <property type="entry name" value="YJEFN_prot_NAXE-like"/>
</dbReference>
<dbReference type="NCBIfam" id="TIGR00197">
    <property type="entry name" value="yjeF_nterm"/>
    <property type="match status" value="1"/>
</dbReference>
<dbReference type="PANTHER" id="PTHR13232">
    <property type="entry name" value="NAD(P)H-HYDRATE EPIMERASE"/>
    <property type="match status" value="1"/>
</dbReference>
<dbReference type="PANTHER" id="PTHR13232:SF10">
    <property type="entry name" value="NAD(P)H-HYDRATE EPIMERASE"/>
    <property type="match status" value="1"/>
</dbReference>
<dbReference type="Pfam" id="PF03853">
    <property type="entry name" value="YjeF_N"/>
    <property type="match status" value="1"/>
</dbReference>
<dbReference type="SUPFAM" id="SSF64153">
    <property type="entry name" value="YjeF N-terminal domain-like"/>
    <property type="match status" value="1"/>
</dbReference>
<dbReference type="PROSITE" id="PS51385">
    <property type="entry name" value="YJEF_N"/>
    <property type="match status" value="1"/>
</dbReference>
<feature type="chain" id="PRO_0000416327" description="NAD(P)H-hydrate epimerase">
    <location>
        <begin position="1"/>
        <end position="289"/>
    </location>
</feature>
<feature type="domain" description="YjeF N-terminal" evidence="1">
    <location>
        <begin position="71"/>
        <end position="277"/>
    </location>
</feature>
<feature type="binding site" evidence="1">
    <location>
        <begin position="122"/>
        <end position="126"/>
    </location>
    <ligand>
        <name>(6S)-NADPHX</name>
        <dbReference type="ChEBI" id="CHEBI:64076"/>
    </ligand>
</feature>
<feature type="binding site" evidence="1">
    <location>
        <position position="123"/>
    </location>
    <ligand>
        <name>K(+)</name>
        <dbReference type="ChEBI" id="CHEBI:29103"/>
    </ligand>
</feature>
<feature type="binding site" evidence="1">
    <location>
        <position position="185"/>
    </location>
    <ligand>
        <name>K(+)</name>
        <dbReference type="ChEBI" id="CHEBI:29103"/>
    </ligand>
</feature>
<feature type="binding site" evidence="1">
    <location>
        <begin position="189"/>
        <end position="195"/>
    </location>
    <ligand>
        <name>(6S)-NADPHX</name>
        <dbReference type="ChEBI" id="CHEBI:64076"/>
    </ligand>
</feature>
<feature type="binding site" evidence="1">
    <location>
        <position position="218"/>
    </location>
    <ligand>
        <name>(6S)-NADPHX</name>
        <dbReference type="ChEBI" id="CHEBI:64076"/>
    </ligand>
</feature>
<feature type="binding site" evidence="1">
    <location>
        <position position="221"/>
    </location>
    <ligand>
        <name>K(+)</name>
        <dbReference type="ChEBI" id="CHEBI:29103"/>
    </ligand>
</feature>
<organism>
    <name type="scientific">Plasmodium vivax (strain Salvador I)</name>
    <dbReference type="NCBI Taxonomy" id="126793"/>
    <lineage>
        <taxon>Eukaryota</taxon>
        <taxon>Sar</taxon>
        <taxon>Alveolata</taxon>
        <taxon>Apicomplexa</taxon>
        <taxon>Aconoidasida</taxon>
        <taxon>Haemosporida</taxon>
        <taxon>Plasmodiidae</taxon>
        <taxon>Plasmodium</taxon>
        <taxon>Plasmodium (Plasmodium)</taxon>
    </lineage>
</organism>
<evidence type="ECO:0000255" key="1">
    <source>
        <dbReference type="HAMAP-Rule" id="MF_03159"/>
    </source>
</evidence>
<name>NNRE_PLAVS</name>
<protein>
    <recommendedName>
        <fullName evidence="1">NAD(P)H-hydrate epimerase</fullName>
        <ecNumber>5.1.99.6</ecNumber>
    </recommendedName>
    <alternativeName>
        <fullName evidence="1">NAD(P)HX epimerase</fullName>
    </alternativeName>
</protein>
<proteinExistence type="inferred from homology"/>
<accession>A5K3F9</accession>
<sequence>MRKELLLRTTNHSAFQNSVYLLGFLRFAKFQLSSRANISNVRPFKGRRTNCAATSVHSNRMEVTYLSQSLAQTIDNELMSDDVGYTTEQLMELAGLSIAQIICREYSLDRFKKVLIFCGPGNNGGDGLVAARHLKHFGYDVTVAYPKEKTKVLFQRLLKLLQHYHVPVVKSATGEDLKLYDLVVDALFGFSFTGEPRSPFDEIIHTINQSNKPVVSVDVPSGTNIDGGSAANALSVNSEMNISLMLPKEGVRHYGKKHYLGGRFIPNSIVEKYNLKVPQFAGDNSYVQL</sequence>
<reference key="1">
    <citation type="journal article" date="2008" name="Nature">
        <title>Comparative genomics of the neglected human malaria parasite Plasmodium vivax.</title>
        <authorList>
            <person name="Carlton J.M."/>
            <person name="Adams J.H."/>
            <person name="Silva J.C."/>
            <person name="Bidwell S.L."/>
            <person name="Lorenzi H."/>
            <person name="Caler E."/>
            <person name="Crabtree J."/>
            <person name="Angiuoli S.V."/>
            <person name="Merino E.F."/>
            <person name="Amedeo P."/>
            <person name="Cheng Q."/>
            <person name="Coulson R.M.R."/>
            <person name="Crabb B.S."/>
            <person name="del Portillo H.A."/>
            <person name="Essien K."/>
            <person name="Feldblyum T.V."/>
            <person name="Fernandez-Becerra C."/>
            <person name="Gilson P.R."/>
            <person name="Gueye A.H."/>
            <person name="Guo X."/>
            <person name="Kang'a S."/>
            <person name="Kooij T.W.A."/>
            <person name="Korsinczky M."/>
            <person name="Meyer E.V.-S."/>
            <person name="Nene V."/>
            <person name="Paulsen I."/>
            <person name="White O."/>
            <person name="Ralph S.A."/>
            <person name="Ren Q."/>
            <person name="Sargeant T.J."/>
            <person name="Salzberg S.L."/>
            <person name="Stoeckert C.J."/>
            <person name="Sullivan S.A."/>
            <person name="Yamamoto M.M."/>
            <person name="Hoffman S.L."/>
            <person name="Wortman J.R."/>
            <person name="Gardner M.J."/>
            <person name="Galinski M.R."/>
            <person name="Barnwell J.W."/>
            <person name="Fraser-Liggett C.M."/>
        </authorList>
    </citation>
    <scope>NUCLEOTIDE SEQUENCE [LARGE SCALE GENOMIC DNA]</scope>
    <source>
        <strain>Salvador I</strain>
    </source>
</reference>
<keyword id="KW-0413">Isomerase</keyword>
<keyword id="KW-0479">Metal-binding</keyword>
<keyword id="KW-0520">NAD</keyword>
<keyword id="KW-0521">NADP</keyword>
<keyword id="KW-0547">Nucleotide-binding</keyword>
<keyword id="KW-0630">Potassium</keyword>
<keyword id="KW-1185">Reference proteome</keyword>
<comment type="function">
    <text evidence="1">Catalyzes the epimerization of the S- and R-forms of NAD(P)HX, a damaged form of NAD(P)H that is a result of enzymatic or heat-dependent hydration. This is a prerequisite for the S-specific NAD(P)H-hydrate dehydratase to allow the repair of both epimers of NAD(P)HX.</text>
</comment>
<comment type="catalytic activity">
    <reaction>
        <text>(6R)-NADHX = (6S)-NADHX</text>
        <dbReference type="Rhea" id="RHEA:32215"/>
        <dbReference type="ChEBI" id="CHEBI:64074"/>
        <dbReference type="ChEBI" id="CHEBI:64075"/>
        <dbReference type="EC" id="5.1.99.6"/>
    </reaction>
</comment>
<comment type="catalytic activity">
    <reaction>
        <text>(6R)-NADPHX = (6S)-NADPHX</text>
        <dbReference type="Rhea" id="RHEA:32227"/>
        <dbReference type="ChEBI" id="CHEBI:64076"/>
        <dbReference type="ChEBI" id="CHEBI:64077"/>
        <dbReference type="EC" id="5.1.99.6"/>
    </reaction>
</comment>
<comment type="cofactor">
    <cofactor evidence="1">
        <name>K(+)</name>
        <dbReference type="ChEBI" id="CHEBI:29103"/>
    </cofactor>
    <text evidence="1">Binds 1 potassium ion per subunit.</text>
</comment>
<comment type="similarity">
    <text evidence="1">Belongs to the NnrE/AIBP family.</text>
</comment>
<gene>
    <name type="ORF">PVX_117475</name>
</gene>